<protein>
    <recommendedName>
        <fullName>Uncharacterized protein UU111</fullName>
    </recommendedName>
</protein>
<feature type="chain" id="PRO_0000220799" description="Uncharacterized protein UU111">
    <location>
        <begin position="1"/>
        <end position="200"/>
    </location>
</feature>
<reference key="1">
    <citation type="journal article" date="2000" name="Nature">
        <title>The complete sequence of the mucosal pathogen Ureaplasma urealyticum.</title>
        <authorList>
            <person name="Glass J.I."/>
            <person name="Lefkowitz E.J."/>
            <person name="Glass J.S."/>
            <person name="Heiner C.R."/>
            <person name="Chen E.Y."/>
            <person name="Cassell G.H."/>
        </authorList>
    </citation>
    <scope>NUCLEOTIDE SEQUENCE [LARGE SCALE GENOMIC DNA]</scope>
    <source>
        <strain>ATCC 700970</strain>
    </source>
</reference>
<proteinExistence type="predicted"/>
<keyword id="KW-1185">Reference proteome</keyword>
<dbReference type="EMBL" id="AF222894">
    <property type="protein sequence ID" value="AAF30517.1"/>
    <property type="molecule type" value="Genomic_DNA"/>
</dbReference>
<dbReference type="RefSeq" id="WP_006688801.1">
    <property type="nucleotide sequence ID" value="NC_002162.1"/>
</dbReference>
<dbReference type="SMR" id="Q9PR33"/>
<dbReference type="STRING" id="273119.UU111"/>
<dbReference type="EnsemblBacteria" id="AAF30517">
    <property type="protein sequence ID" value="AAF30517"/>
    <property type="gene ID" value="UU111"/>
</dbReference>
<dbReference type="GeneID" id="29672739"/>
<dbReference type="KEGG" id="uur:UU111"/>
<dbReference type="eggNOG" id="COG4859">
    <property type="taxonomic scope" value="Bacteria"/>
</dbReference>
<dbReference type="HOGENOM" id="CLU_1365738_0_0_14"/>
<dbReference type="OrthoDB" id="404012at2"/>
<dbReference type="Proteomes" id="UP000000423">
    <property type="component" value="Chromosome"/>
</dbReference>
<dbReference type="InterPro" id="IPR020941">
    <property type="entry name" value="SUFU-like_domain"/>
</dbReference>
<dbReference type="Pfam" id="PF05076">
    <property type="entry name" value="SUFU"/>
    <property type="match status" value="1"/>
</dbReference>
<gene>
    <name type="ordered locus">UU111</name>
</gene>
<name>Y111_UREPA</name>
<sequence length="200" mass="23944">MNYKYSAEEKQIIYNYILREYGQVDHIIFLSNEHIRVPIEYDILVIKKQNLQILMTFGLGAFKSHNHEENTQERAEIFLELPVDWDFNKHENMWPVHFLINIVKYSYSNHLTLKWLQTFINPSYFNKSNKIAGFLDLSWYGENSLECKINNDFFVSFYQILIIDDEELFYAKTNGIRALSKFFDDGKSRIVDLNRKSFVK</sequence>
<accession>Q9PR33</accession>
<organism>
    <name type="scientific">Ureaplasma parvum serovar 3 (strain ATCC 700970)</name>
    <dbReference type="NCBI Taxonomy" id="273119"/>
    <lineage>
        <taxon>Bacteria</taxon>
        <taxon>Bacillati</taxon>
        <taxon>Mycoplasmatota</taxon>
        <taxon>Mycoplasmoidales</taxon>
        <taxon>Mycoplasmoidaceae</taxon>
        <taxon>Ureaplasma</taxon>
    </lineage>
</organism>